<name>RK33_AETGR</name>
<feature type="chain" id="PRO_0000356781" description="Large ribosomal subunit protein bL33c">
    <location>
        <begin position="1"/>
        <end position="66"/>
    </location>
</feature>
<evidence type="ECO:0000255" key="1">
    <source>
        <dbReference type="HAMAP-Rule" id="MF_00294"/>
    </source>
</evidence>
<evidence type="ECO:0000305" key="2"/>
<geneLocation type="chloroplast"/>
<sequence length="66" mass="7761">MAKGKDVRVTIILECTNCVRNDIKKESPGISRYITQKNRHNTPSRLELRKFCPYCYKHTIHGEIKK</sequence>
<gene>
    <name evidence="1" type="primary">rpl33</name>
</gene>
<proteinExistence type="inferred from homology"/>
<comment type="subcellular location">
    <subcellularLocation>
        <location>Plastid</location>
        <location>Chloroplast</location>
    </subcellularLocation>
</comment>
<comment type="similarity">
    <text evidence="1">Belongs to the bacterial ribosomal protein bL33 family.</text>
</comment>
<organism>
    <name type="scientific">Aethionema grandiflorum</name>
    <name type="common">Persian stone-cress</name>
    <dbReference type="NCBI Taxonomy" id="72657"/>
    <lineage>
        <taxon>Eukaryota</taxon>
        <taxon>Viridiplantae</taxon>
        <taxon>Streptophyta</taxon>
        <taxon>Embryophyta</taxon>
        <taxon>Tracheophyta</taxon>
        <taxon>Spermatophyta</taxon>
        <taxon>Magnoliopsida</taxon>
        <taxon>eudicotyledons</taxon>
        <taxon>Gunneridae</taxon>
        <taxon>Pentapetalae</taxon>
        <taxon>rosids</taxon>
        <taxon>malvids</taxon>
        <taxon>Brassicales</taxon>
        <taxon>Brassicaceae</taxon>
        <taxon>Aethionemeae</taxon>
        <taxon>Aethionema</taxon>
    </lineage>
</organism>
<accession>A4QJM0</accession>
<reference key="1">
    <citation type="submission" date="2007-03" db="EMBL/GenBank/DDBJ databases">
        <title>Sequencing analysis of Aethionema grandiflorum chloroplast DNA.</title>
        <authorList>
            <person name="Hosouchi T."/>
            <person name="Tsuruoka H."/>
            <person name="Kotani H."/>
        </authorList>
    </citation>
    <scope>NUCLEOTIDE SEQUENCE [LARGE SCALE GENOMIC DNA]</scope>
</reference>
<dbReference type="EMBL" id="AP009367">
    <property type="protein sequence ID" value="BAF49875.1"/>
    <property type="molecule type" value="Genomic_DNA"/>
</dbReference>
<dbReference type="RefSeq" id="YP_001123051.1">
    <property type="nucleotide sequence ID" value="NC_009266.1"/>
</dbReference>
<dbReference type="GeneID" id="4962304"/>
<dbReference type="GO" id="GO:0009507">
    <property type="term" value="C:chloroplast"/>
    <property type="evidence" value="ECO:0007669"/>
    <property type="project" value="UniProtKB-SubCell"/>
</dbReference>
<dbReference type="GO" id="GO:1990904">
    <property type="term" value="C:ribonucleoprotein complex"/>
    <property type="evidence" value="ECO:0007669"/>
    <property type="project" value="UniProtKB-KW"/>
</dbReference>
<dbReference type="GO" id="GO:0005840">
    <property type="term" value="C:ribosome"/>
    <property type="evidence" value="ECO:0007669"/>
    <property type="project" value="UniProtKB-KW"/>
</dbReference>
<dbReference type="GO" id="GO:0003735">
    <property type="term" value="F:structural constituent of ribosome"/>
    <property type="evidence" value="ECO:0007669"/>
    <property type="project" value="InterPro"/>
</dbReference>
<dbReference type="GO" id="GO:0006412">
    <property type="term" value="P:translation"/>
    <property type="evidence" value="ECO:0007669"/>
    <property type="project" value="UniProtKB-UniRule"/>
</dbReference>
<dbReference type="FunFam" id="2.20.28.120:FF:000004">
    <property type="entry name" value="50S ribosomal protein L33, chloroplastic"/>
    <property type="match status" value="1"/>
</dbReference>
<dbReference type="Gene3D" id="2.20.28.120">
    <property type="entry name" value="Ribosomal protein L33"/>
    <property type="match status" value="1"/>
</dbReference>
<dbReference type="HAMAP" id="MF_00294">
    <property type="entry name" value="Ribosomal_bL33"/>
    <property type="match status" value="1"/>
</dbReference>
<dbReference type="InterPro" id="IPR001705">
    <property type="entry name" value="Ribosomal_bL33"/>
</dbReference>
<dbReference type="InterPro" id="IPR018264">
    <property type="entry name" value="Ribosomal_bL33_CS"/>
</dbReference>
<dbReference type="InterPro" id="IPR038584">
    <property type="entry name" value="Ribosomal_bL33_sf"/>
</dbReference>
<dbReference type="InterPro" id="IPR011332">
    <property type="entry name" value="Ribosomal_zn-bd"/>
</dbReference>
<dbReference type="NCBIfam" id="NF001764">
    <property type="entry name" value="PRK00504.1"/>
    <property type="match status" value="1"/>
</dbReference>
<dbReference type="NCBIfam" id="NF001860">
    <property type="entry name" value="PRK00595.1"/>
    <property type="match status" value="1"/>
</dbReference>
<dbReference type="NCBIfam" id="TIGR01023">
    <property type="entry name" value="rpmG_bact"/>
    <property type="match status" value="1"/>
</dbReference>
<dbReference type="PANTHER" id="PTHR43168">
    <property type="entry name" value="50S RIBOSOMAL PROTEIN L33, CHLOROPLASTIC"/>
    <property type="match status" value="1"/>
</dbReference>
<dbReference type="PANTHER" id="PTHR43168:SF2">
    <property type="entry name" value="LARGE RIBOSOMAL SUBUNIT PROTEIN BL33C"/>
    <property type="match status" value="1"/>
</dbReference>
<dbReference type="Pfam" id="PF00471">
    <property type="entry name" value="Ribosomal_L33"/>
    <property type="match status" value="1"/>
</dbReference>
<dbReference type="SUPFAM" id="SSF57829">
    <property type="entry name" value="Zn-binding ribosomal proteins"/>
    <property type="match status" value="1"/>
</dbReference>
<dbReference type="PROSITE" id="PS00582">
    <property type="entry name" value="RIBOSOMAL_L33"/>
    <property type="match status" value="1"/>
</dbReference>
<protein>
    <recommendedName>
        <fullName evidence="1">Large ribosomal subunit protein bL33c</fullName>
    </recommendedName>
    <alternativeName>
        <fullName evidence="2">50S ribosomal protein L33, chloroplastic</fullName>
    </alternativeName>
</protein>
<keyword id="KW-0150">Chloroplast</keyword>
<keyword id="KW-0934">Plastid</keyword>
<keyword id="KW-0687">Ribonucleoprotein</keyword>
<keyword id="KW-0689">Ribosomal protein</keyword>